<organism>
    <name type="scientific">Diguetia canities</name>
    <name type="common">Desert bush spider</name>
    <name type="synonym">Segestria canities</name>
    <dbReference type="NCBI Taxonomy" id="38407"/>
    <lineage>
        <taxon>Eukaryota</taxon>
        <taxon>Metazoa</taxon>
        <taxon>Ecdysozoa</taxon>
        <taxon>Arthropoda</taxon>
        <taxon>Chelicerata</taxon>
        <taxon>Arachnida</taxon>
        <taxon>Araneae</taxon>
        <taxon>Araneomorphae</taxon>
        <taxon>Haplogynae</taxon>
        <taxon>Pholcoidea</taxon>
        <taxon>Diguetidae</taxon>
        <taxon>Diguetia</taxon>
    </lineage>
</organism>
<evidence type="ECO:0000255" key="1"/>
<evidence type="ECO:0000269" key="2">
    <source>
    </source>
</evidence>
<evidence type="ECO:0000269" key="3">
    <source>
    </source>
</evidence>
<evidence type="ECO:0000269" key="4">
    <source>
    </source>
</evidence>
<evidence type="ECO:0000269" key="5">
    <source>
    </source>
</evidence>
<evidence type="ECO:0000303" key="6">
    <source>
    </source>
</evidence>
<evidence type="ECO:0000303" key="7">
    <source>
    </source>
</evidence>
<evidence type="ECO:0000303" key="8">
    <source>
    </source>
</evidence>
<evidence type="ECO:0000303" key="9">
    <source>
    </source>
</evidence>
<evidence type="ECO:0000305" key="10"/>
<evidence type="ECO:0000312" key="11">
    <source>
        <dbReference type="PDB" id="2MI5"/>
    </source>
</evidence>
<evidence type="ECO:0000312" key="12">
    <source>
        <dbReference type="PDB" id="6A90"/>
    </source>
</evidence>
<evidence type="ECO:0000312" key="13">
    <source>
        <dbReference type="PDB" id="6A91"/>
    </source>
</evidence>
<evidence type="ECO:0000312" key="14">
    <source>
        <dbReference type="PDB" id="6A95"/>
    </source>
</evidence>
<evidence type="ECO:0007744" key="15">
    <source>
        <dbReference type="PDB" id="2MI5"/>
    </source>
</evidence>
<evidence type="ECO:0007744" key="16">
    <source>
        <dbReference type="PDB" id="6A90"/>
    </source>
</evidence>
<evidence type="ECO:0007744" key="17">
    <source>
        <dbReference type="PDB" id="6A91"/>
    </source>
</evidence>
<evidence type="ECO:0007744" key="18">
    <source>
        <dbReference type="PDB" id="6A95"/>
    </source>
</evidence>
<evidence type="ECO:0007829" key="19">
    <source>
        <dbReference type="PDB" id="6A90"/>
    </source>
</evidence>
<evidence type="ECO:0007829" key="20">
    <source>
        <dbReference type="PDB" id="6A95"/>
    </source>
</evidence>
<dbReference type="EMBL" id="U21904">
    <property type="protein sequence ID" value="AAB60253.1"/>
    <property type="molecule type" value="mRNA"/>
</dbReference>
<dbReference type="PDB" id="2MI5">
    <property type="method" value="NMR"/>
    <property type="chains" value="A=39-94"/>
</dbReference>
<dbReference type="PDB" id="6A90">
    <property type="method" value="EM"/>
    <property type="resolution" value="2.80 A"/>
    <property type="chains" value="B=39-94"/>
</dbReference>
<dbReference type="PDB" id="6A91">
    <property type="method" value="EM"/>
    <property type="resolution" value="3.20 A"/>
    <property type="chains" value="B=39-94"/>
</dbReference>
<dbReference type="PDB" id="6A95">
    <property type="method" value="EM"/>
    <property type="resolution" value="2.60 A"/>
    <property type="chains" value="B=39-94"/>
</dbReference>
<dbReference type="PDB" id="8F0S">
    <property type="method" value="EM"/>
    <property type="resolution" value="3.10 A"/>
    <property type="chains" value="B=39-94"/>
</dbReference>
<dbReference type="PDBsum" id="2MI5"/>
<dbReference type="PDBsum" id="6A90"/>
<dbReference type="PDBsum" id="6A91"/>
<dbReference type="PDBsum" id="6A95"/>
<dbReference type="PDBsum" id="8F0S"/>
<dbReference type="BMRB" id="P49126"/>
<dbReference type="EMDB" id="EMD-28779"/>
<dbReference type="EMDB" id="EMD-6995"/>
<dbReference type="EMDB" id="EMD-6996"/>
<dbReference type="EMDB" id="EMD-6997"/>
<dbReference type="SMR" id="P49126"/>
<dbReference type="IntAct" id="P49126">
    <property type="interactions" value="1"/>
</dbReference>
<dbReference type="TCDB" id="8.B.30.1.1">
    <property type="family name" value="the diguetoxin (diguetoxin) family"/>
</dbReference>
<dbReference type="ArachnoServer" id="AS000352">
    <property type="toxin name" value="mu-diguetoxin-Dc1a"/>
</dbReference>
<dbReference type="EvolutionaryTrace" id="P49126"/>
<dbReference type="GO" id="GO:0005576">
    <property type="term" value="C:extracellular region"/>
    <property type="evidence" value="ECO:0007669"/>
    <property type="project" value="UniProtKB-SubCell"/>
</dbReference>
<dbReference type="GO" id="GO:0044231">
    <property type="term" value="C:host cell presynaptic membrane"/>
    <property type="evidence" value="ECO:0007669"/>
    <property type="project" value="UniProtKB-KW"/>
</dbReference>
<dbReference type="GO" id="GO:0017080">
    <property type="term" value="F:sodium channel regulator activity"/>
    <property type="evidence" value="ECO:0007669"/>
    <property type="project" value="UniProtKB-KW"/>
</dbReference>
<dbReference type="GO" id="GO:0090729">
    <property type="term" value="F:toxin activity"/>
    <property type="evidence" value="ECO:0007669"/>
    <property type="project" value="UniProtKB-KW"/>
</dbReference>
<dbReference type="Gene3D" id="2.30.130.120">
    <property type="match status" value="1"/>
</dbReference>
<dbReference type="InterPro" id="IPR035290">
    <property type="entry name" value="Beta/Mu-DGTX-Dc1"/>
</dbReference>
<dbReference type="Pfam" id="PF17491">
    <property type="entry name" value="m_DGTX_Dc1a_b_c"/>
    <property type="match status" value="1"/>
</dbReference>
<name>TXI92_DIGCA</name>
<sequence>MKVFVVLLCLSLAAVYALEERLDKDADIMLDSPADMERAKDGDVEGPAGCKKYDVECDSGECCQKQYLWYKWRPLDCRCLKSGFFSSKCVCRDV</sequence>
<protein>
    <recommendedName>
        <fullName evidence="6">Beta-diguetoxin-Dc1a</fullName>
        <shortName evidence="6">Beta-DGTX-Dc1a</shortName>
        <shortName evidence="7">Dc1a</shortName>
    </recommendedName>
    <alternativeName>
        <fullName evidence="8 9">Insecticidal toxin DTX9.2</fullName>
    </alternativeName>
</protein>
<keyword id="KW-0002">3D-structure</keyword>
<keyword id="KW-0903">Direct protein sequencing</keyword>
<keyword id="KW-1015">Disulfide bond</keyword>
<keyword id="KW-0872">Ion channel impairing toxin</keyword>
<keyword id="KW-0960">Knottin</keyword>
<keyword id="KW-0528">Neurotoxin</keyword>
<keyword id="KW-0638">Presynaptic neurotoxin</keyword>
<keyword id="KW-0964">Secreted</keyword>
<keyword id="KW-0732">Signal</keyword>
<keyword id="KW-0800">Toxin</keyword>
<keyword id="KW-0738">Voltage-gated sodium channel impairing toxin</keyword>
<comment type="function">
    <text evidence="2 4 5">Insecticidal toxin (PubMed:8541888, PubMed:8896202). This toxin promotes opening of insect Nav channels. The toxin binds to the S1-S2 and S3-S4 loops in the domain II voltage-sensor of insect Nav channels (i.e., receptor site 4). The American cockroach P.americana is largely resistant to the effects of this toxin due to an unusual sequence within the domain II S1-S2 loop. In vivo, paralyzes lepidopteran and dipteran larvae. Paralyzed insects ultimately die from secondary effects of starvation and dehydration (PubMed:25014760).</text>
</comment>
<comment type="subcellular location">
    <subcellularLocation>
        <location evidence="4">Secreted</location>
    </subcellularLocation>
</comment>
<comment type="tissue specificity">
    <text evidence="10">Expressed by the venom gland.</text>
</comment>
<comment type="domain">
    <text evidence="2 3">The presence of a 'disulfide through disulfide knot' structurally defines this protein as a knottin.</text>
</comment>
<comment type="mass spectrometry"/>
<comment type="toxic dose">
    <text evidence="4">PD(50) is 0.38 nmol/g in lepidopteran larvae.</text>
</comment>
<comment type="toxic dose">
    <text evidence="2">LD(50) is 0.231 +- 32 nmol/g in blowfly adult (L.cuprina).</text>
</comment>
<comment type="toxic dose">
    <text evidence="2">LD(50) is 0.493 nmol/g in adult housefly (Musca domestica).</text>
</comment>
<comment type="miscellaneous">
    <text evidence="2">Negative results: has no effect on the human Nav channel subtypes Nav1.1-Nav1.7, and no effect on hERG (Kv11.1) and Kv2.1. Is non-toxic to mice at 657 pmol/g (4.2 mg/kg) i.p. and 156 pmol/g (1.0 mg/kg) i.c.v.</text>
</comment>
<comment type="similarity">
    <text evidence="10">Belongs to the neurotoxin 26 (DTX) family.</text>
</comment>
<proteinExistence type="evidence at protein level"/>
<accession>P49126</accession>
<reference key="1">
    <citation type="journal article" date="1995" name="Insect Biochem. Mol. Biol.">
        <title>Characterization and cloning of insecticidal peptides from the primitive weaving spider Diguetia canities.</title>
        <authorList>
            <person name="Krapcho K.J."/>
            <person name="Kral R.M. Jr."/>
            <person name="Vanwagenen B.C."/>
            <person name="Eppler K.G."/>
            <person name="Morgan T.K."/>
        </authorList>
    </citation>
    <scope>NUCLEOTIDE SEQUENCE [MRNA]</scope>
    <scope>PROTEIN SEQUENCE OF 39-71</scope>
    <scope>FUNCTION</scope>
    <scope>MASS SPECTROMETRY</scope>
    <scope>TOXIC DOSE</scope>
    <source>
        <tissue>Venom gland</tissue>
    </source>
</reference>
<reference key="2">
    <citation type="journal article" date="1996" name="Toxicon">
        <title>Mode of action of an insecticidal peptide toxin from the venom of a weaving spider (Diguetia canities).</title>
        <authorList>
            <person name="Bloomquist J.R."/>
            <person name="Kinne L.P."/>
            <person name="Deutsch V."/>
            <person name="Simpson S.F."/>
        </authorList>
    </citation>
    <scope>FUNCTION</scope>
</reference>
<reference evidence="11" key="3">
    <citation type="journal article" date="2014" name="Nat. Commun.">
        <title>A distinct sodium channel voltage-sensor locus determines insect selectivity of the spider toxin Dc1a.</title>
        <authorList>
            <person name="Bende N.S."/>
            <person name="Dziemborowicz S."/>
            <person name="Mobli M."/>
            <person name="Herzig V."/>
            <person name="Gilchrist J."/>
            <person name="Wagner J."/>
            <person name="Nicholson G.M."/>
            <person name="King G.F."/>
            <person name="Bosmans F."/>
        </authorList>
    </citation>
    <scope>STRUCTURE BY NMR OF 39-94</scope>
    <scope>FUNCTION</scope>
    <scope>TOXIC DOSE</scope>
</reference>
<reference evidence="12 13 14" key="4">
    <citation type="journal article" date="2018" name="Science">
        <title>Structural basis for the modulation of voltage-gated sodium channels by animal toxins.</title>
        <authorList>
            <person name="Shen H."/>
            <person name="Li Z."/>
            <person name="Jiang Y."/>
            <person name="Pan X."/>
            <person name="Wu J."/>
            <person name="Cristofori-Armstrong B."/>
            <person name="Smith J.J."/>
            <person name="Chin Y.K.Y."/>
            <person name="Lei J."/>
            <person name="Zhou Q."/>
            <person name="King G.F."/>
            <person name="Yan N."/>
        </authorList>
    </citation>
    <scope>STRUCTURE BY ELECTRON MICROSCOPY (2.6 ANGSTROMS) IN COMPLEX WITH AMERICAN COCKROACH NAV; SAXITOXIN AND TETRODOTOXIN</scope>
    <scope>DISULFIDE BOND</scope>
    <scope>MUTAGENESIS OF ASP-58; TYR-70; ARG-78; LYS-81; PHE-84; PHE-85; SER-86 AND ASP-93</scope>
</reference>
<feature type="signal peptide" evidence="1">
    <location>
        <begin position="1"/>
        <end position="17"/>
    </location>
</feature>
<feature type="propeptide" id="PRO_0000035542" evidence="4">
    <location>
        <begin position="18"/>
        <end position="38"/>
    </location>
</feature>
<feature type="chain" id="PRO_0000035543" description="Beta-diguetoxin-Dc1a">
    <location>
        <begin position="39"/>
        <end position="94"/>
    </location>
</feature>
<feature type="site" description="Interacts with insect Nav channel" evidence="3">
    <location>
        <position position="58"/>
    </location>
</feature>
<feature type="site" description="Interacts with insect Nav channel" evidence="3">
    <location>
        <position position="70"/>
    </location>
</feature>
<feature type="site" description="Interacts with insect Nav channel" evidence="3">
    <location>
        <position position="78"/>
    </location>
</feature>
<feature type="site" description="Interacts with insect Nav channel" evidence="3">
    <location>
        <position position="81"/>
    </location>
</feature>
<feature type="site" description="Interacts with insect Nav channel" evidence="3">
    <location>
        <position position="85"/>
    </location>
</feature>
<feature type="site" description="Interacts with insect Nav channel" evidence="3">
    <location>
        <position position="86"/>
    </location>
</feature>
<feature type="site" description="Interacts with insect Nav channel" evidence="3">
    <location>
        <position position="93"/>
    </location>
</feature>
<feature type="disulfide bond" evidence="2 3 15 16 17 18">
    <location>
        <begin position="50"/>
        <end position="63"/>
    </location>
</feature>
<feature type="disulfide bond" evidence="2 3 15 16 17 18">
    <location>
        <begin position="57"/>
        <end position="77"/>
    </location>
</feature>
<feature type="disulfide bond" evidence="2 3 15 16 17">
    <location>
        <begin position="62"/>
        <end position="91"/>
    </location>
</feature>
<feature type="disulfide bond" evidence="2 3 15 16 17 18">
    <location>
        <begin position="79"/>
        <end position="89"/>
    </location>
</feature>
<feature type="sequence variant">
    <original>Q</original>
    <variation>T</variation>
    <location>
        <position position="64"/>
    </location>
</feature>
<feature type="mutagenesis site" description="Almost complete loss of activation of B.germanica sodium channel." evidence="3">
    <original>D</original>
    <variation>A</variation>
    <location>
        <position position="58"/>
    </location>
</feature>
<feature type="mutagenesis site" description="Almost complete loss of activation of B.germanica sodium channel." evidence="3">
    <original>Y</original>
    <variation>A</variation>
    <location>
        <position position="70"/>
    </location>
</feature>
<feature type="mutagenesis site" description="Almost complete loss of activation of B.germanica sodium channel." evidence="3">
    <original>R</original>
    <variation>A</variation>
    <location>
        <position position="78"/>
    </location>
</feature>
<feature type="mutagenesis site" description="Almost complete loss of activation of B.germanica sodium channel." evidence="3">
    <original>K</original>
    <variation>A</variation>
    <location>
        <position position="81"/>
    </location>
</feature>
<feature type="mutagenesis site" description="Severe decrease of activation of B.germanica sodium channel." evidence="3">
    <original>F</original>
    <variation>A</variation>
    <location>
        <position position="84"/>
    </location>
</feature>
<feature type="mutagenesis site" description="Severe decrease of activation of B.germanica sodium channel." evidence="3">
    <original>F</original>
    <variation>A</variation>
    <location>
        <position position="85"/>
    </location>
</feature>
<feature type="mutagenesis site" description="Severe decrease of activation of B.germanica sodium channel." evidence="3">
    <original>S</original>
    <variation>A</variation>
    <location>
        <position position="86"/>
    </location>
</feature>
<feature type="mutagenesis site" description="Almost complete loss of activation of B.germanica sodium channel." evidence="3">
    <original>D</original>
    <variation>A</variation>
    <location>
        <position position="93"/>
    </location>
</feature>
<feature type="strand" evidence="19">
    <location>
        <begin position="44"/>
        <end position="49"/>
    </location>
</feature>
<feature type="strand" evidence="20">
    <location>
        <begin position="59"/>
        <end position="61"/>
    </location>
</feature>
<feature type="strand" evidence="20">
    <location>
        <begin position="64"/>
        <end position="67"/>
    </location>
</feature>
<feature type="strand" evidence="20">
    <location>
        <begin position="69"/>
        <end position="81"/>
    </location>
</feature>
<feature type="strand" evidence="20">
    <location>
        <begin position="87"/>
        <end position="93"/>
    </location>
</feature>